<gene>
    <name type="primary">GPATCH4</name>
    <name type="synonym">GPATC4</name>
</gene>
<accession>Q2KJE1</accession>
<reference key="1">
    <citation type="submission" date="2005-09" db="EMBL/GenBank/DDBJ databases">
        <authorList>
            <consortium name="NIH - Mammalian Gene Collection (MGC) project"/>
        </authorList>
    </citation>
    <scope>NUCLEOTIDE SEQUENCE [LARGE SCALE MRNA]</scope>
    <source>
        <strain>Hereford</strain>
        <tissue>Thymus</tissue>
    </source>
</reference>
<keyword id="KW-0007">Acetylation</keyword>
<keyword id="KW-1017">Isopeptide bond</keyword>
<keyword id="KW-0597">Phosphoprotein</keyword>
<keyword id="KW-1185">Reference proteome</keyword>
<keyword id="KW-0832">Ubl conjugation</keyword>
<proteinExistence type="evidence at transcript level"/>
<protein>
    <recommendedName>
        <fullName>G patch domain-containing protein 4</fullName>
    </recommendedName>
</protein>
<name>GPTC4_BOVIN</name>
<organism>
    <name type="scientific">Bos taurus</name>
    <name type="common">Bovine</name>
    <dbReference type="NCBI Taxonomy" id="9913"/>
    <lineage>
        <taxon>Eukaryota</taxon>
        <taxon>Metazoa</taxon>
        <taxon>Chordata</taxon>
        <taxon>Craniata</taxon>
        <taxon>Vertebrata</taxon>
        <taxon>Euteleostomi</taxon>
        <taxon>Mammalia</taxon>
        <taxon>Eutheria</taxon>
        <taxon>Laurasiatheria</taxon>
        <taxon>Artiodactyla</taxon>
        <taxon>Ruminantia</taxon>
        <taxon>Pecora</taxon>
        <taxon>Bovidae</taxon>
        <taxon>Bovinae</taxon>
        <taxon>Bos</taxon>
    </lineage>
</organism>
<evidence type="ECO:0000250" key="1">
    <source>
        <dbReference type="UniProtKB" id="Q5T3I0"/>
    </source>
</evidence>
<evidence type="ECO:0000255" key="2">
    <source>
        <dbReference type="PROSITE-ProRule" id="PRU00092"/>
    </source>
</evidence>
<evidence type="ECO:0000256" key="3">
    <source>
        <dbReference type="SAM" id="MobiDB-lite"/>
    </source>
</evidence>
<sequence>MSITPEVKSRGMKFAEEQLLKHGWTQGKGLGRKENGITQALRVTLKQDTYGVGHDPAKEFTNHWWNDLFNKTAANLVVETRQDGVQIRRLSKETTRQDHAKPNLLYQKFVKTATLTSSGEKPDKDWESCSDDDSQEPKPPNVLTDEMLLQACEGRTAHKAARLGITMKAKLARLEAQEQAFLAQLKGQDPGVPQLQSESKSPKKKKKKRKQKEEEEPTTTERSAEKYSEHTDESIRKSKKKKRQHQEERVTDEREGTAIENEEETIRTGGLGELKNREHVDRSFRKKKRRGQHHEERAELAVLDNEGGKVAVSEVGTEEAERRVYTHPCGRSKKRRQHEEEDLNTEDEEVEEALVDSGTREAESRSCSDQKRGRSKKKRRQYQEEEVLDGPGVNTAQKAKKKKQKKRD</sequence>
<dbReference type="EMBL" id="BC105388">
    <property type="protein sequence ID" value="AAI05389.1"/>
    <property type="molecule type" value="mRNA"/>
</dbReference>
<dbReference type="RefSeq" id="NP_001071597.1">
    <property type="nucleotide sequence ID" value="NM_001078129.2"/>
</dbReference>
<dbReference type="FunCoup" id="Q2KJE1">
    <property type="interactions" value="263"/>
</dbReference>
<dbReference type="STRING" id="9913.ENSBTAP00000065937"/>
<dbReference type="PaxDb" id="9913-ENSBTAP00000033817"/>
<dbReference type="GeneID" id="768314"/>
<dbReference type="KEGG" id="bta:768314"/>
<dbReference type="CTD" id="54865"/>
<dbReference type="VEuPathDB" id="HostDB:ENSBTAG00000000406"/>
<dbReference type="eggNOG" id="KOG2809">
    <property type="taxonomic scope" value="Eukaryota"/>
</dbReference>
<dbReference type="HOGENOM" id="CLU_674312_0_0_1"/>
<dbReference type="InParanoid" id="Q2KJE1"/>
<dbReference type="OrthoDB" id="10019757at2759"/>
<dbReference type="TreeFam" id="TF326721"/>
<dbReference type="Proteomes" id="UP000009136">
    <property type="component" value="Chromosome 3"/>
</dbReference>
<dbReference type="Bgee" id="ENSBTAG00000000406">
    <property type="expression patterns" value="Expressed in prostate gland and 105 other cell types or tissues"/>
</dbReference>
<dbReference type="GO" id="GO:0005730">
    <property type="term" value="C:nucleolus"/>
    <property type="evidence" value="ECO:0000318"/>
    <property type="project" value="GO_Central"/>
</dbReference>
<dbReference type="GO" id="GO:0003676">
    <property type="term" value="F:nucleic acid binding"/>
    <property type="evidence" value="ECO:0007669"/>
    <property type="project" value="InterPro"/>
</dbReference>
<dbReference type="InterPro" id="IPR000467">
    <property type="entry name" value="G_patch_dom"/>
</dbReference>
<dbReference type="InterPro" id="IPR050656">
    <property type="entry name" value="PINX1"/>
</dbReference>
<dbReference type="PANTHER" id="PTHR23149">
    <property type="entry name" value="G PATCH DOMAIN CONTAINING PROTEIN"/>
    <property type="match status" value="1"/>
</dbReference>
<dbReference type="PANTHER" id="PTHR23149:SF9">
    <property type="entry name" value="G PATCH DOMAIN-CONTAINING PROTEIN 4"/>
    <property type="match status" value="1"/>
</dbReference>
<dbReference type="Pfam" id="PF01585">
    <property type="entry name" value="G-patch"/>
    <property type="match status" value="1"/>
</dbReference>
<dbReference type="SMART" id="SM00443">
    <property type="entry name" value="G_patch"/>
    <property type="match status" value="1"/>
</dbReference>
<dbReference type="PROSITE" id="PS50174">
    <property type="entry name" value="G_PATCH"/>
    <property type="match status" value="1"/>
</dbReference>
<feature type="chain" id="PRO_0000287461" description="G patch domain-containing protein 4">
    <location>
        <begin position="1"/>
        <end position="408"/>
    </location>
</feature>
<feature type="domain" description="G-patch" evidence="2">
    <location>
        <begin position="11"/>
        <end position="57"/>
    </location>
</feature>
<feature type="region of interest" description="Disordered" evidence="3">
    <location>
        <begin position="116"/>
        <end position="141"/>
    </location>
</feature>
<feature type="region of interest" description="Disordered" evidence="3">
    <location>
        <begin position="187"/>
        <end position="408"/>
    </location>
</feature>
<feature type="compositionally biased region" description="Basic and acidic residues" evidence="3">
    <location>
        <begin position="222"/>
        <end position="236"/>
    </location>
</feature>
<feature type="compositionally biased region" description="Basic and acidic residues" evidence="3">
    <location>
        <begin position="245"/>
        <end position="257"/>
    </location>
</feature>
<feature type="compositionally biased region" description="Basic and acidic residues" evidence="3">
    <location>
        <begin position="274"/>
        <end position="283"/>
    </location>
</feature>
<feature type="compositionally biased region" description="Acidic residues" evidence="3">
    <location>
        <begin position="340"/>
        <end position="354"/>
    </location>
</feature>
<feature type="compositionally biased region" description="Basic and acidic residues" evidence="3">
    <location>
        <begin position="358"/>
        <end position="372"/>
    </location>
</feature>
<feature type="compositionally biased region" description="Basic residues" evidence="3">
    <location>
        <begin position="398"/>
        <end position="408"/>
    </location>
</feature>
<feature type="modified residue" description="N-acetylmethionine" evidence="1">
    <location>
        <position position="1"/>
    </location>
</feature>
<feature type="modified residue" description="Phosphothreonine" evidence="1">
    <location>
        <position position="4"/>
    </location>
</feature>
<feature type="modified residue" description="Phosphothreonine" evidence="1">
    <location>
        <position position="116"/>
    </location>
</feature>
<feature type="modified residue" description="Phosphoserine" evidence="1">
    <location>
        <position position="128"/>
    </location>
</feature>
<feature type="modified residue" description="Phosphoserine" evidence="1">
    <location>
        <position position="130"/>
    </location>
</feature>
<feature type="cross-link" description="Glycyl lysine isopeptide (Lys-Gly) (interchain with G-Cter in SUMO2)" evidence="1">
    <location>
        <position position="46"/>
    </location>
</feature>